<evidence type="ECO:0000250" key="1">
    <source>
        <dbReference type="UniProtKB" id="P16636"/>
    </source>
</evidence>
<evidence type="ECO:0000250" key="2">
    <source>
        <dbReference type="UniProtKB" id="P33072"/>
    </source>
</evidence>
<evidence type="ECO:0000250" key="3">
    <source>
        <dbReference type="UniProtKB" id="P58215"/>
    </source>
</evidence>
<evidence type="ECO:0000250" key="4">
    <source>
        <dbReference type="UniProtKB" id="Q9Z175"/>
    </source>
</evidence>
<evidence type="ECO:0000255" key="5"/>
<evidence type="ECO:0000255" key="6">
    <source>
        <dbReference type="PROSITE-ProRule" id="PRU00196"/>
    </source>
</evidence>
<evidence type="ECO:0000255" key="7">
    <source>
        <dbReference type="PROSITE-ProRule" id="PRU00498"/>
    </source>
</evidence>
<evidence type="ECO:0000269" key="8">
    <source>
    </source>
</evidence>
<evidence type="ECO:0000303" key="9">
    <source>
    </source>
</evidence>
<evidence type="ECO:0000305" key="10"/>
<evidence type="ECO:0000312" key="11">
    <source>
        <dbReference type="ZFIN" id="ZDB-GENE-070818-2"/>
    </source>
</evidence>
<accession>F1RD85</accession>
<accession>A6MH32</accession>
<accession>X1WBP7</accession>
<dbReference type="EC" id="1.4.3.-" evidence="3"/>
<dbReference type="EC" id="1.4.3.13" evidence="3"/>
<dbReference type="EMBL" id="FP085411">
    <property type="status" value="NOT_ANNOTATED_CDS"/>
    <property type="molecule type" value="Genomic_DNA"/>
</dbReference>
<dbReference type="EMBL" id="FP085432">
    <property type="status" value="NOT_ANNOTATED_CDS"/>
    <property type="molecule type" value="Genomic_DNA"/>
</dbReference>
<dbReference type="EMBL" id="EF030483">
    <property type="protein sequence ID" value="ABM86969.1"/>
    <property type="molecule type" value="mRNA"/>
</dbReference>
<dbReference type="RefSeq" id="XP_005173146.1">
    <property type="nucleotide sequence ID" value="XM_005173089.5"/>
</dbReference>
<dbReference type="SMR" id="F1RD85"/>
<dbReference type="FunCoup" id="F1RD85">
    <property type="interactions" value="20"/>
</dbReference>
<dbReference type="STRING" id="7955.ENSDARP00000127639"/>
<dbReference type="GlyCosmos" id="F1RD85">
    <property type="glycosylation" value="3 sites, No reported glycans"/>
</dbReference>
<dbReference type="PaxDb" id="7955-ENSDARP00000127639"/>
<dbReference type="Ensembl" id="ENSDART00000054866">
    <property type="protein sequence ID" value="ENSDARP00000054865"/>
    <property type="gene ID" value="ENSDARG00000076306"/>
</dbReference>
<dbReference type="Ensembl" id="ENSDART00000181151">
    <property type="protein sequence ID" value="ENSDARP00000157309"/>
    <property type="gene ID" value="ENSDARG00000076306"/>
</dbReference>
<dbReference type="GeneID" id="568839"/>
<dbReference type="AGR" id="ZFIN:ZDB-GENE-070818-2"/>
<dbReference type="CTD" id="568839"/>
<dbReference type="ZFIN" id="ZDB-GENE-070818-2">
    <property type="gene designation" value="loxl3a"/>
</dbReference>
<dbReference type="eggNOG" id="ENOG502QSX8">
    <property type="taxonomic scope" value="Eukaryota"/>
</dbReference>
<dbReference type="HOGENOM" id="CLU_002555_3_0_1"/>
<dbReference type="InParanoid" id="F1RD85"/>
<dbReference type="OrthoDB" id="547291at2759"/>
<dbReference type="PhylomeDB" id="F1RD85"/>
<dbReference type="TreeFam" id="TF326061"/>
<dbReference type="BRENDA" id="1.4.3.13">
    <property type="organism ID" value="928"/>
</dbReference>
<dbReference type="PRO" id="PR:F1RD85"/>
<dbReference type="Proteomes" id="UP000000437">
    <property type="component" value="Chromosome 14"/>
</dbReference>
<dbReference type="Bgee" id="ENSDARG00000076306">
    <property type="expression patterns" value="Expressed in zone of skin and 13 other cell types or tissues"/>
</dbReference>
<dbReference type="GO" id="GO:0062023">
    <property type="term" value="C:collagen-containing extracellular matrix"/>
    <property type="evidence" value="ECO:0000318"/>
    <property type="project" value="GO_Central"/>
</dbReference>
<dbReference type="GO" id="GO:0005737">
    <property type="term" value="C:cytoplasm"/>
    <property type="evidence" value="ECO:0000250"/>
    <property type="project" value="UniProtKB"/>
</dbReference>
<dbReference type="GO" id="GO:0005615">
    <property type="term" value="C:extracellular space"/>
    <property type="evidence" value="ECO:0000250"/>
    <property type="project" value="UniProtKB"/>
</dbReference>
<dbReference type="GO" id="GO:0016020">
    <property type="term" value="C:membrane"/>
    <property type="evidence" value="ECO:0007669"/>
    <property type="project" value="InterPro"/>
</dbReference>
<dbReference type="GO" id="GO:0005634">
    <property type="term" value="C:nucleus"/>
    <property type="evidence" value="ECO:0000250"/>
    <property type="project" value="UniProtKB"/>
</dbReference>
<dbReference type="GO" id="GO:0005507">
    <property type="term" value="F:copper ion binding"/>
    <property type="evidence" value="ECO:0007669"/>
    <property type="project" value="InterPro"/>
</dbReference>
<dbReference type="GO" id="GO:0001968">
    <property type="term" value="F:fibronectin binding"/>
    <property type="evidence" value="ECO:0000250"/>
    <property type="project" value="UniProtKB"/>
</dbReference>
<dbReference type="GO" id="GO:0004720">
    <property type="term" value="F:protein-lysine 6-oxidase activity"/>
    <property type="evidence" value="ECO:0000250"/>
    <property type="project" value="UniProtKB"/>
</dbReference>
<dbReference type="GO" id="GO:0030199">
    <property type="term" value="P:collagen fibril organization"/>
    <property type="evidence" value="ECO:0000318"/>
    <property type="project" value="GO_Central"/>
</dbReference>
<dbReference type="GO" id="GO:1905590">
    <property type="term" value="P:fibronectin fibril organization"/>
    <property type="evidence" value="ECO:0000250"/>
    <property type="project" value="UniProtKB"/>
</dbReference>
<dbReference type="GO" id="GO:0006954">
    <property type="term" value="P:inflammatory response"/>
    <property type="evidence" value="ECO:0000250"/>
    <property type="project" value="UniProtKB"/>
</dbReference>
<dbReference type="GO" id="GO:0030324">
    <property type="term" value="P:lung development"/>
    <property type="evidence" value="ECO:0000250"/>
    <property type="project" value="UniProtKB"/>
</dbReference>
<dbReference type="GO" id="GO:2000329">
    <property type="term" value="P:negative regulation of T-helper 17 cell lineage commitment"/>
    <property type="evidence" value="ECO:0000250"/>
    <property type="project" value="UniProtKB"/>
</dbReference>
<dbReference type="GO" id="GO:0018057">
    <property type="term" value="P:peptidyl-lysine oxidation"/>
    <property type="evidence" value="ECO:0000250"/>
    <property type="project" value="UniProtKB"/>
</dbReference>
<dbReference type="GO" id="GO:2001046">
    <property type="term" value="P:positive regulation of integrin-mediated signaling pathway"/>
    <property type="evidence" value="ECO:0000250"/>
    <property type="project" value="UniProtKB"/>
</dbReference>
<dbReference type="GO" id="GO:0060021">
    <property type="term" value="P:roof of mouth development"/>
    <property type="evidence" value="ECO:0000250"/>
    <property type="project" value="UniProtKB"/>
</dbReference>
<dbReference type="GO" id="GO:0061053">
    <property type="term" value="P:somite development"/>
    <property type="evidence" value="ECO:0000250"/>
    <property type="project" value="UniProtKB"/>
</dbReference>
<dbReference type="GO" id="GO:0021510">
    <property type="term" value="P:spinal cord development"/>
    <property type="evidence" value="ECO:0000250"/>
    <property type="project" value="UniProtKB"/>
</dbReference>
<dbReference type="FunFam" id="3.10.250.10:FF:000001">
    <property type="entry name" value="Lysyl oxidase 4 isoform X1"/>
    <property type="match status" value="2"/>
</dbReference>
<dbReference type="FunFam" id="3.10.250.10:FF:000008">
    <property type="entry name" value="Lysyl oxidase homolog 2"/>
    <property type="match status" value="1"/>
</dbReference>
<dbReference type="FunFam" id="3.10.250.10:FF:000067">
    <property type="entry name" value="Lysyl oxidase homolog 3A"/>
    <property type="match status" value="1"/>
</dbReference>
<dbReference type="Gene3D" id="3.10.250.10">
    <property type="entry name" value="SRCR-like domain"/>
    <property type="match status" value="4"/>
</dbReference>
<dbReference type="InterPro" id="IPR050912">
    <property type="entry name" value="LOX-like_protein"/>
</dbReference>
<dbReference type="InterPro" id="IPR001695">
    <property type="entry name" value="Lysyl_oxidase"/>
</dbReference>
<dbReference type="InterPro" id="IPR019828">
    <property type="entry name" value="Lysyl_oxidase_CS"/>
</dbReference>
<dbReference type="InterPro" id="IPR001190">
    <property type="entry name" value="SRCR"/>
</dbReference>
<dbReference type="InterPro" id="IPR036772">
    <property type="entry name" value="SRCR-like_dom_sf"/>
</dbReference>
<dbReference type="PANTHER" id="PTHR45817:SF2">
    <property type="entry name" value="LYSYL OXIDASE HOMOLOG 3"/>
    <property type="match status" value="1"/>
</dbReference>
<dbReference type="PANTHER" id="PTHR45817">
    <property type="entry name" value="LYSYL OXIDASE-LIKE-RELATED"/>
    <property type="match status" value="1"/>
</dbReference>
<dbReference type="Pfam" id="PF01186">
    <property type="entry name" value="Lysyl_oxidase"/>
    <property type="match status" value="1"/>
</dbReference>
<dbReference type="Pfam" id="PF00530">
    <property type="entry name" value="SRCR"/>
    <property type="match status" value="4"/>
</dbReference>
<dbReference type="PRINTS" id="PR00074">
    <property type="entry name" value="LYSYLOXIDASE"/>
</dbReference>
<dbReference type="PRINTS" id="PR00258">
    <property type="entry name" value="SPERACTRCPTR"/>
</dbReference>
<dbReference type="SMART" id="SM00202">
    <property type="entry name" value="SR"/>
    <property type="match status" value="4"/>
</dbReference>
<dbReference type="SUPFAM" id="SSF56487">
    <property type="entry name" value="SRCR-like"/>
    <property type="match status" value="4"/>
</dbReference>
<dbReference type="PROSITE" id="PS00926">
    <property type="entry name" value="LYSYL_OXIDASE"/>
    <property type="match status" value="1"/>
</dbReference>
<dbReference type="PROSITE" id="PS00420">
    <property type="entry name" value="SRCR_1"/>
    <property type="match status" value="2"/>
</dbReference>
<dbReference type="PROSITE" id="PS50287">
    <property type="entry name" value="SRCR_2"/>
    <property type="match status" value="4"/>
</dbReference>
<proteinExistence type="evidence at transcript level"/>
<comment type="function">
    <text evidence="3 4">Protein-lysine 6-oxidase that mediates the oxidation of peptidyl lysine residues to allysine in target proteins. Catalyzes the post-translational oxidative deamination of peptidyl lysine residues in precursors of elastin and different types of collagens, a prerequisite in the formation of cross-links between collagens and elastin. Can mediate oxidation of lysine residues that are acetylated. Also able to catalyze deacetylation of lysine residues (By similarity).</text>
</comment>
<comment type="catalytic activity">
    <reaction evidence="3">
        <text>L-lysyl-[protein] + O2 + H2O = (S)-2-amino-6-oxohexanoyl-[protein] + H2O2 + NH4(+)</text>
        <dbReference type="Rhea" id="RHEA:24544"/>
        <dbReference type="Rhea" id="RHEA-COMP:9752"/>
        <dbReference type="Rhea" id="RHEA-COMP:12448"/>
        <dbReference type="ChEBI" id="CHEBI:15377"/>
        <dbReference type="ChEBI" id="CHEBI:15379"/>
        <dbReference type="ChEBI" id="CHEBI:16240"/>
        <dbReference type="ChEBI" id="CHEBI:28938"/>
        <dbReference type="ChEBI" id="CHEBI:29969"/>
        <dbReference type="ChEBI" id="CHEBI:131803"/>
        <dbReference type="EC" id="1.4.3.13"/>
    </reaction>
</comment>
<comment type="catalytic activity">
    <reaction evidence="3">
        <text>N(6)-acetyl-L-lysyl-[protein] + O2 + H2O = acetamide + (S)-2-amino-6-oxohexanoyl-[protein] + H2O2</text>
        <dbReference type="Rhea" id="RHEA:51648"/>
        <dbReference type="Rhea" id="RHEA-COMP:10731"/>
        <dbReference type="Rhea" id="RHEA-COMP:12448"/>
        <dbReference type="ChEBI" id="CHEBI:15377"/>
        <dbReference type="ChEBI" id="CHEBI:15379"/>
        <dbReference type="ChEBI" id="CHEBI:16240"/>
        <dbReference type="ChEBI" id="CHEBI:27856"/>
        <dbReference type="ChEBI" id="CHEBI:61930"/>
        <dbReference type="ChEBI" id="CHEBI:131803"/>
    </reaction>
</comment>
<comment type="cofactor">
    <cofactor evidence="1">
        <name>Cu cation</name>
        <dbReference type="ChEBI" id="CHEBI:23378"/>
    </cofactor>
</comment>
<comment type="cofactor">
    <cofactor evidence="2">
        <name>lysine tyrosylquinone residue</name>
        <dbReference type="ChEBI" id="CHEBI:20489"/>
    </cofactor>
    <text evidence="2">Contains 1 lysine tyrosylquinone.</text>
</comment>
<comment type="subcellular location">
    <subcellularLocation>
        <location evidence="4">Secreted</location>
        <location evidence="4">Extracellular space</location>
    </subcellularLocation>
    <subcellularLocation>
        <location evidence="3">Cytoplasm</location>
    </subcellularLocation>
    <subcellularLocation>
        <location evidence="3">Nucleus</location>
    </subcellularLocation>
    <text evidence="3">It is unclear how loxl3a is both intracellular (cytoplasmic and nuclear) and extracellular: it contains a clear signal sequence and is predicted to localize in the extracellular medium. However, the intracellular location is clearly reported and at least another protein of the family (loxl2) also has intracellular and extracellular localization despite the presence of a signal sequence.</text>
</comment>
<comment type="developmental stage">
    <text evidence="8">Weakly expressed at 30 hours post fertilization (hpf) in the ventral head mesenchyme, but not spatially restricted after this time-point.</text>
</comment>
<comment type="PTM">
    <text evidence="2">The lysine tyrosylquinone cross-link (LTQ) is generated by condensation of the epsilon-amino group of a lysine with a topaquinone produced by oxidation of tyrosine.</text>
</comment>
<comment type="disruption phenotype">
    <text evidence="8">No visible phenotype.</text>
</comment>
<comment type="similarity">
    <text evidence="10">Belongs to the lysyl oxidase family.</text>
</comment>
<protein>
    <recommendedName>
        <fullName evidence="10">Lysyl oxidase homolog 3A</fullName>
        <ecNumber evidence="3">1.4.3.-</ecNumber>
        <ecNumber evidence="3">1.4.3.13</ecNumber>
    </recommendedName>
    <alternativeName>
        <fullName evidence="10">Lysyl oxidase-like protein 3A</fullName>
    </alternativeName>
</protein>
<organism>
    <name type="scientific">Danio rerio</name>
    <name type="common">Zebrafish</name>
    <name type="synonym">Brachydanio rerio</name>
    <dbReference type="NCBI Taxonomy" id="7955"/>
    <lineage>
        <taxon>Eukaryota</taxon>
        <taxon>Metazoa</taxon>
        <taxon>Chordata</taxon>
        <taxon>Craniata</taxon>
        <taxon>Vertebrata</taxon>
        <taxon>Euteleostomi</taxon>
        <taxon>Actinopterygii</taxon>
        <taxon>Neopterygii</taxon>
        <taxon>Teleostei</taxon>
        <taxon>Ostariophysi</taxon>
        <taxon>Cypriniformes</taxon>
        <taxon>Danionidae</taxon>
        <taxon>Danioninae</taxon>
        <taxon>Danio</taxon>
    </lineage>
</organism>
<feature type="signal peptide" evidence="5">
    <location>
        <begin position="1"/>
        <end position="25"/>
    </location>
</feature>
<feature type="chain" id="PRO_5003269238" description="Lysyl oxidase homolog 3A" evidence="5">
    <location>
        <begin position="26"/>
        <end position="739"/>
    </location>
</feature>
<feature type="domain" description="SRCR 1" evidence="6">
    <location>
        <begin position="38"/>
        <end position="139"/>
    </location>
</feature>
<feature type="domain" description="SRCR 2" evidence="6">
    <location>
        <begin position="166"/>
        <end position="272"/>
    </location>
</feature>
<feature type="domain" description="SRCR 3" evidence="6">
    <location>
        <begin position="293"/>
        <end position="393"/>
    </location>
</feature>
<feature type="domain" description="SRCR 4" evidence="6">
    <location>
        <begin position="403"/>
        <end position="511"/>
    </location>
</feature>
<feature type="modified residue" description="2',4',5'-topaquinone" evidence="2">
    <location>
        <position position="656"/>
    </location>
</feature>
<feature type="glycosylation site" description="N-linked (GlcNAc...) asparagine" evidence="7">
    <location>
        <position position="256"/>
    </location>
</feature>
<feature type="glycosylation site" description="N-linked (GlcNAc...) asparagine" evidence="7">
    <location>
        <position position="468"/>
    </location>
</feature>
<feature type="glycosylation site" description="N-linked (GlcNAc...) asparagine" evidence="7">
    <location>
        <position position="611"/>
    </location>
</feature>
<feature type="disulfide bond" evidence="6">
    <location>
        <begin position="64"/>
        <end position="128"/>
    </location>
</feature>
<feature type="disulfide bond" evidence="6">
    <location>
        <begin position="77"/>
        <end position="138"/>
    </location>
</feature>
<feature type="disulfide bond" evidence="6">
    <location>
        <begin position="108"/>
        <end position="118"/>
    </location>
</feature>
<feature type="disulfide bond" evidence="6">
    <location>
        <begin position="196"/>
        <end position="261"/>
    </location>
</feature>
<feature type="disulfide bond" evidence="6">
    <location>
        <begin position="209"/>
        <end position="271"/>
    </location>
</feature>
<feature type="disulfide bond" evidence="6">
    <location>
        <begin position="238"/>
        <end position="248"/>
    </location>
</feature>
<feature type="disulfide bond" evidence="6">
    <location>
        <begin position="318"/>
        <end position="382"/>
    </location>
</feature>
<feature type="disulfide bond" evidence="6">
    <location>
        <begin position="331"/>
        <end position="392"/>
    </location>
</feature>
<feature type="disulfide bond" evidence="6">
    <location>
        <begin position="362"/>
        <end position="372"/>
    </location>
</feature>
<feature type="disulfide bond" evidence="6">
    <location>
        <begin position="433"/>
        <end position="497"/>
    </location>
</feature>
<feature type="disulfide bond" evidence="6">
    <location>
        <begin position="446"/>
        <end position="510"/>
    </location>
</feature>
<feature type="disulfide bond" evidence="6">
    <location>
        <begin position="479"/>
        <end position="489"/>
    </location>
</feature>
<feature type="cross-link" description="Lysine tyrosylquinone (Lys-Tyr)" evidence="2">
    <location>
        <begin position="620"/>
        <end position="656"/>
    </location>
</feature>
<keyword id="KW-0186">Copper</keyword>
<keyword id="KW-0963">Cytoplasm</keyword>
<keyword id="KW-1015">Disulfide bond</keyword>
<keyword id="KW-0325">Glycoprotein</keyword>
<keyword id="KW-0886">LTQ</keyword>
<keyword id="KW-0479">Metal-binding</keyword>
<keyword id="KW-0539">Nucleus</keyword>
<keyword id="KW-0560">Oxidoreductase</keyword>
<keyword id="KW-1185">Reference proteome</keyword>
<keyword id="KW-0677">Repeat</keyword>
<keyword id="KW-0964">Secreted</keyword>
<keyword id="KW-0732">Signal</keyword>
<keyword id="KW-0801">TPQ</keyword>
<gene>
    <name evidence="9 11" type="primary">loxl3a</name>
</gene>
<sequence>MLRSELRDMVVAMVLWGILLPFCLSQTTSPSQDGKIKFRLAGYPRKHNEGRIEVFYNREWGTICDDDFTLANAHVLCRQLGFVEALSWSHSAKYGPGSGKIWLDNVICGGSENSIEKCVSRGWGNSDCTHQEDAGVICKDERLPGFAESNIIEMQVDEKRMEKIRLRPLKGAHAGRLPVTEGVVEVKFKEGWGHICNTGWTIKNSRVVCGMMGFPSQRSVGKKPNSLKSAYRIHSVTCSGNEAHLSACTMEFSRANSSAPCPGGGAAVVSCVPGLQFTQGRVRKAKLNPVPQMRLKGGARAGEGRVEVLKGSEWGTVCDDHWNLQSASVVCRELGFGTAKEALTGARMGQGMGPIYMNEVQCGGDEKSLWDCPHQSITAEDCKHTEDASVICNIPYMGFEKLMRLTGGRTRLEGRVELLLPAGGGVRDWGLICGDGWTSREAMVVCRQLGLGHASSGLRETWYWDSSNVTEMVMSGVKCKGDEMTLTDCQHHSVVSCKRAGAQFSAGVICSDMASDLVLNAPLVEQTVYIEDRPLHLLYCAAEENCLAKSAAQASWPYGHRRLLRFSSEIHNIGKADFRPRLGRHSWVWHECHRHYHSMDIFTYYDLLSLNGTKVADGHKASFCLEDTECHEGVSKRYECANFGEQGITVGCWDLYRHDIDCQWIDITDVSPGNYILQVIINPNFEVAESDFTNNAMRCNCKYDGHRVWLHKCHLGDSFSEEAEKEFEHYPGQLNNKIS</sequence>
<name>LOX3A_DANRE</name>
<reference key="1">
    <citation type="journal article" date="2013" name="Nature">
        <title>The zebrafish reference genome sequence and its relationship to the human genome.</title>
        <authorList>
            <person name="Howe K."/>
            <person name="Clark M.D."/>
            <person name="Torroja C.F."/>
            <person name="Torrance J."/>
            <person name="Berthelot C."/>
            <person name="Muffato M."/>
            <person name="Collins J.E."/>
            <person name="Humphray S."/>
            <person name="McLaren K."/>
            <person name="Matthews L."/>
            <person name="McLaren S."/>
            <person name="Sealy I."/>
            <person name="Caccamo M."/>
            <person name="Churcher C."/>
            <person name="Scott C."/>
            <person name="Barrett J.C."/>
            <person name="Koch R."/>
            <person name="Rauch G.J."/>
            <person name="White S."/>
            <person name="Chow W."/>
            <person name="Kilian B."/>
            <person name="Quintais L.T."/>
            <person name="Guerra-Assuncao J.A."/>
            <person name="Zhou Y."/>
            <person name="Gu Y."/>
            <person name="Yen J."/>
            <person name="Vogel J.H."/>
            <person name="Eyre T."/>
            <person name="Redmond S."/>
            <person name="Banerjee R."/>
            <person name="Chi J."/>
            <person name="Fu B."/>
            <person name="Langley E."/>
            <person name="Maguire S.F."/>
            <person name="Laird G.K."/>
            <person name="Lloyd D."/>
            <person name="Kenyon E."/>
            <person name="Donaldson S."/>
            <person name="Sehra H."/>
            <person name="Almeida-King J."/>
            <person name="Loveland J."/>
            <person name="Trevanion S."/>
            <person name="Jones M."/>
            <person name="Quail M."/>
            <person name="Willey D."/>
            <person name="Hunt A."/>
            <person name="Burton J."/>
            <person name="Sims S."/>
            <person name="McLay K."/>
            <person name="Plumb B."/>
            <person name="Davis J."/>
            <person name="Clee C."/>
            <person name="Oliver K."/>
            <person name="Clark R."/>
            <person name="Riddle C."/>
            <person name="Elliot D."/>
            <person name="Threadgold G."/>
            <person name="Harden G."/>
            <person name="Ware D."/>
            <person name="Begum S."/>
            <person name="Mortimore B."/>
            <person name="Kerry G."/>
            <person name="Heath P."/>
            <person name="Phillimore B."/>
            <person name="Tracey A."/>
            <person name="Corby N."/>
            <person name="Dunn M."/>
            <person name="Johnson C."/>
            <person name="Wood J."/>
            <person name="Clark S."/>
            <person name="Pelan S."/>
            <person name="Griffiths G."/>
            <person name="Smith M."/>
            <person name="Glithero R."/>
            <person name="Howden P."/>
            <person name="Barker N."/>
            <person name="Lloyd C."/>
            <person name="Stevens C."/>
            <person name="Harley J."/>
            <person name="Holt K."/>
            <person name="Panagiotidis G."/>
            <person name="Lovell J."/>
            <person name="Beasley H."/>
            <person name="Henderson C."/>
            <person name="Gordon D."/>
            <person name="Auger K."/>
            <person name="Wright D."/>
            <person name="Collins J."/>
            <person name="Raisen C."/>
            <person name="Dyer L."/>
            <person name="Leung K."/>
            <person name="Robertson L."/>
            <person name="Ambridge K."/>
            <person name="Leongamornlert D."/>
            <person name="McGuire S."/>
            <person name="Gilderthorp R."/>
            <person name="Griffiths C."/>
            <person name="Manthravadi D."/>
            <person name="Nichol S."/>
            <person name="Barker G."/>
            <person name="Whitehead S."/>
            <person name="Kay M."/>
            <person name="Brown J."/>
            <person name="Murnane C."/>
            <person name="Gray E."/>
            <person name="Humphries M."/>
            <person name="Sycamore N."/>
            <person name="Barker D."/>
            <person name="Saunders D."/>
            <person name="Wallis J."/>
            <person name="Babbage A."/>
            <person name="Hammond S."/>
            <person name="Mashreghi-Mohammadi M."/>
            <person name="Barr L."/>
            <person name="Martin S."/>
            <person name="Wray P."/>
            <person name="Ellington A."/>
            <person name="Matthews N."/>
            <person name="Ellwood M."/>
            <person name="Woodmansey R."/>
            <person name="Clark G."/>
            <person name="Cooper J."/>
            <person name="Tromans A."/>
            <person name="Grafham D."/>
            <person name="Skuce C."/>
            <person name="Pandian R."/>
            <person name="Andrews R."/>
            <person name="Harrison E."/>
            <person name="Kimberley A."/>
            <person name="Garnett J."/>
            <person name="Fosker N."/>
            <person name="Hall R."/>
            <person name="Garner P."/>
            <person name="Kelly D."/>
            <person name="Bird C."/>
            <person name="Palmer S."/>
            <person name="Gehring I."/>
            <person name="Berger A."/>
            <person name="Dooley C.M."/>
            <person name="Ersan-Urun Z."/>
            <person name="Eser C."/>
            <person name="Geiger H."/>
            <person name="Geisler M."/>
            <person name="Karotki L."/>
            <person name="Kirn A."/>
            <person name="Konantz J."/>
            <person name="Konantz M."/>
            <person name="Oberlander M."/>
            <person name="Rudolph-Geiger S."/>
            <person name="Teucke M."/>
            <person name="Lanz C."/>
            <person name="Raddatz G."/>
            <person name="Osoegawa K."/>
            <person name="Zhu B."/>
            <person name="Rapp A."/>
            <person name="Widaa S."/>
            <person name="Langford C."/>
            <person name="Yang F."/>
            <person name="Schuster S.C."/>
            <person name="Carter N.P."/>
            <person name="Harrow J."/>
            <person name="Ning Z."/>
            <person name="Herrero J."/>
            <person name="Searle S.M."/>
            <person name="Enright A."/>
            <person name="Geisler R."/>
            <person name="Plasterk R.H."/>
            <person name="Lee C."/>
            <person name="Westerfield M."/>
            <person name="de Jong P.J."/>
            <person name="Zon L.I."/>
            <person name="Postlethwait J.H."/>
            <person name="Nusslein-Volhard C."/>
            <person name="Hubbard T.J."/>
            <person name="Roest Crollius H."/>
            <person name="Rogers J."/>
            <person name="Stemple D.L."/>
        </authorList>
    </citation>
    <scope>NUCLEOTIDE SEQUENCE [LARGE SCALE GENOMIC DNA]</scope>
    <source>
        <strain>Tuebingen</strain>
    </source>
</reference>
<reference key="2">
    <citation type="journal article" date="2007" name="Dev. Biol.">
        <title>Essential role of lysyl oxidases in notochord development.</title>
        <authorList>
            <person name="Gansner J.M."/>
            <person name="Mendelsohn B.A."/>
            <person name="Hultman K.A."/>
            <person name="Johnson S.L."/>
            <person name="Gitlin J.D."/>
        </authorList>
    </citation>
    <scope>NUCLEOTIDE SEQUENCE [MRNA] OF 472-739</scope>
</reference>
<reference key="3">
    <citation type="journal article" date="2011" name="Matrix Biol.">
        <title>Lysyl oxidase-like 3b is critical for cartilage maturation during zebrafish craniofacial development.</title>
        <authorList>
            <person name="van Boxtel A.L."/>
            <person name="Gansner J.M."/>
            <person name="Hakvoort H.W."/>
            <person name="Snell H."/>
            <person name="Legler J."/>
            <person name="Gitlin J.D."/>
        </authorList>
    </citation>
    <scope>DISRUPTION PHENOTYPE</scope>
    <scope>DEVELOPMENTAL STAGE</scope>
</reference>